<protein>
    <recommendedName>
        <fullName>Hemagglutinin glycoprotein</fullName>
    </recommendedName>
</protein>
<accession>Q66000</accession>
<organism>
    <name type="scientific">Canine distemper virus (strain A92-6)</name>
    <name type="common">CDV</name>
    <dbReference type="NCBI Taxonomy" id="82827"/>
    <lineage>
        <taxon>Viruses</taxon>
        <taxon>Riboviria</taxon>
        <taxon>Orthornavirae</taxon>
        <taxon>Negarnaviricota</taxon>
        <taxon>Haploviricotina</taxon>
        <taxon>Monjiviricetes</taxon>
        <taxon>Mononegavirales</taxon>
        <taxon>Paramyxoviridae</taxon>
        <taxon>Orthoparamyxovirinae</taxon>
        <taxon>Morbillivirus</taxon>
        <taxon>Morbillivirus canis</taxon>
    </lineage>
</organism>
<evidence type="ECO:0000250" key="1"/>
<evidence type="ECO:0000255" key="2"/>
<evidence type="ECO:0000305" key="3"/>
<feature type="chain" id="PRO_0000142595" description="Hemagglutinin glycoprotein">
    <location>
        <begin position="1"/>
        <end position="607"/>
    </location>
</feature>
<feature type="topological domain" description="Intravirion" evidence="2">
    <location>
        <begin position="1"/>
        <end position="37"/>
    </location>
</feature>
<feature type="transmembrane region" description="Helical" evidence="2">
    <location>
        <begin position="38"/>
        <end position="58"/>
    </location>
</feature>
<feature type="topological domain" description="Virion surface" evidence="2">
    <location>
        <begin position="59"/>
        <end position="607"/>
    </location>
</feature>
<feature type="glycosylation site" description="N-linked (GlcNAc...) asparagine; by host" evidence="2">
    <location>
        <position position="149"/>
    </location>
</feature>
<feature type="glycosylation site" description="N-linked (GlcNAc...) asparagine; by host" evidence="2">
    <location>
        <position position="309"/>
    </location>
</feature>
<feature type="glycosylation site" description="N-linked (GlcNAc...) asparagine; by host" evidence="2">
    <location>
        <position position="391"/>
    </location>
</feature>
<feature type="glycosylation site" description="N-linked (GlcNAc...) asparagine; by host" evidence="2">
    <location>
        <position position="422"/>
    </location>
</feature>
<feature type="glycosylation site" description="N-linked (GlcNAc...) asparagine; by host" evidence="2">
    <location>
        <position position="456"/>
    </location>
</feature>
<feature type="glycosylation site" description="N-linked (GlcNAc...) asparagine; by host" evidence="2">
    <location>
        <position position="587"/>
    </location>
</feature>
<dbReference type="EMBL" id="Z54166">
    <property type="protein sequence ID" value="CAA90879.1"/>
    <property type="molecule type" value="Genomic_RNA"/>
</dbReference>
<dbReference type="SMR" id="Q66000"/>
<dbReference type="GlyCosmos" id="Q66000">
    <property type="glycosylation" value="6 sites, No reported glycans"/>
</dbReference>
<dbReference type="GO" id="GO:0020002">
    <property type="term" value="C:host cell plasma membrane"/>
    <property type="evidence" value="ECO:0007669"/>
    <property type="project" value="UniProtKB-SubCell"/>
</dbReference>
<dbReference type="GO" id="GO:0016020">
    <property type="term" value="C:membrane"/>
    <property type="evidence" value="ECO:0007669"/>
    <property type="project" value="UniProtKB-KW"/>
</dbReference>
<dbReference type="GO" id="GO:0019031">
    <property type="term" value="C:viral envelope"/>
    <property type="evidence" value="ECO:0007669"/>
    <property type="project" value="UniProtKB-KW"/>
</dbReference>
<dbReference type="GO" id="GO:0055036">
    <property type="term" value="C:virion membrane"/>
    <property type="evidence" value="ECO:0007669"/>
    <property type="project" value="UniProtKB-SubCell"/>
</dbReference>
<dbReference type="GO" id="GO:0046789">
    <property type="term" value="F:host cell surface receptor binding"/>
    <property type="evidence" value="ECO:0007669"/>
    <property type="project" value="InterPro"/>
</dbReference>
<dbReference type="GO" id="GO:0046718">
    <property type="term" value="P:symbiont entry into host cell"/>
    <property type="evidence" value="ECO:0007669"/>
    <property type="project" value="UniProtKB-KW"/>
</dbReference>
<dbReference type="GO" id="GO:0019062">
    <property type="term" value="P:virion attachment to host cell"/>
    <property type="evidence" value="ECO:0007669"/>
    <property type="project" value="UniProtKB-KW"/>
</dbReference>
<dbReference type="Gene3D" id="2.120.10.10">
    <property type="match status" value="1"/>
</dbReference>
<dbReference type="InterPro" id="IPR000665">
    <property type="entry name" value="Hemagglutn/HN"/>
</dbReference>
<dbReference type="InterPro" id="IPR036278">
    <property type="entry name" value="Sialidase_sf"/>
</dbReference>
<dbReference type="Pfam" id="PF00423">
    <property type="entry name" value="HN"/>
    <property type="match status" value="1"/>
</dbReference>
<dbReference type="SUPFAM" id="SSF50939">
    <property type="entry name" value="Sialidases"/>
    <property type="match status" value="1"/>
</dbReference>
<organismHost>
    <name type="scientific">Ailuropoda melanoleuca</name>
    <name type="common">Giant panda</name>
    <dbReference type="NCBI Taxonomy" id="9646"/>
</organismHost>
<organismHost>
    <name type="scientific">Ailurus fulgens</name>
    <name type="common">Himalayan red panda</name>
    <dbReference type="NCBI Taxonomy" id="9649"/>
</organismHost>
<organismHost>
    <name type="scientific">Canis lupus familiaris</name>
    <name type="common">Dog</name>
    <name type="synonym">Canis familiaris</name>
    <dbReference type="NCBI Taxonomy" id="9615"/>
</organismHost>
<organismHost>
    <name type="scientific">Mustela</name>
    <dbReference type="NCBI Taxonomy" id="9665"/>
</organismHost>
<organismHost>
    <name type="scientific">Panthera leo</name>
    <name type="common">Lion</name>
    <dbReference type="NCBI Taxonomy" id="9689"/>
</organismHost>
<organismHost>
    <name type="scientific">Procyon lotor</name>
    <name type="common">Raccoon</name>
    <dbReference type="NCBI Taxonomy" id="9654"/>
</organismHost>
<organismHost>
    <name type="scientific">Zalophus californianus</name>
    <name type="common">California sealion</name>
    <dbReference type="NCBI Taxonomy" id="9704"/>
</organismHost>
<comment type="function">
    <text evidence="1">Attaches the virus to cell receptors and thereby initiating infection. Binding of H protein to the receptor induces a conformational change that allows the F protein to trigger virion/cell membranes fusion. The cellular receptor might be SLAM, and may explain the lymphotropism of the virus (By similarity).</text>
</comment>
<comment type="subunit">
    <text evidence="1">Binds canine SLAMF1 at the cell surface.</text>
</comment>
<comment type="subcellular location">
    <subcellularLocation>
        <location evidence="3">Virion membrane</location>
        <topology evidence="3">Single-pass type II membrane protein</topology>
    </subcellularLocation>
    <subcellularLocation>
        <location evidence="1">Host cell membrane</location>
        <topology evidence="1">Single-pass type II membrane protein</topology>
    </subcellularLocation>
</comment>
<comment type="similarity">
    <text evidence="3">Belongs to the paramyxoviruses hemagglutinin-neuraminidase family. Non-sialidase subfamily.</text>
</comment>
<comment type="caution">
    <text evidence="3">Morbiliviruses hemagglutinins have no neuraminidase activity.</text>
</comment>
<name>HEMA_CDVA6</name>
<reference key="1">
    <citation type="journal article" date="1996" name="J. Gen. Virol.">
        <title>Canine distemper virus from diseased large felids: biological properties and phylogenetic relationships.</title>
        <authorList>
            <person name="Harder T.C."/>
            <person name="Kenter M."/>
            <person name="Vos H."/>
            <person name="Siebelink K."/>
            <person name="Huisman W."/>
            <person name="van Amerongen G."/>
            <person name="Orvell C."/>
            <person name="Barrett T."/>
            <person name="Appel M.J.G."/>
            <person name="Osterhaus A.D.M.E."/>
        </authorList>
    </citation>
    <scope>NUCLEOTIDE SEQUENCE [GENOMIC RNA]</scope>
</reference>
<keyword id="KW-0325">Glycoprotein</keyword>
<keyword id="KW-0348">Hemagglutinin</keyword>
<keyword id="KW-1032">Host cell membrane</keyword>
<keyword id="KW-1043">Host membrane</keyword>
<keyword id="KW-0945">Host-virus interaction</keyword>
<keyword id="KW-0472">Membrane</keyword>
<keyword id="KW-0735">Signal-anchor</keyword>
<keyword id="KW-0812">Transmembrane</keyword>
<keyword id="KW-1133">Transmembrane helix</keyword>
<keyword id="KW-1161">Viral attachment to host cell</keyword>
<keyword id="KW-0261">Viral envelope protein</keyword>
<keyword id="KW-0946">Virion</keyword>
<keyword id="KW-1160">Virus entry into host cell</keyword>
<gene>
    <name type="primary">H</name>
</gene>
<sequence>MLSYQDKVGAFYKDNARANSSKLSLVTEEQGGRRPPYLLFVLLILLVGIMALLAITGVRFHQVSTSNMEFSRLLKEDMEKSEAVHHQVIDVLTPLFKIIGDEVGLRLPQKLNEIKQFILQKTNFFNPNREFDFRDLHWCINPPSKIKVNFTNYCDTIGIRKSIASAANPILLSAHTGGRGDIFPPYRCSGATTSVGRVFPLSVSLSMSLISRTSEIINMLTAISDGVYGKTYLLVPDYIEGEFDTQKIRVFEIGFIKRWLNDMPLLQTTNYMVLPENSKAKVCTIAVGELTLASLCVDESTILLYHDSNGSQDGILVVTLGIFGATPMDQVEEVIPVAHPSVEKIHITNHRGFIKDSIATWMVPALVSEKQEEQKSCLESACQRKSYPMCNQTSWEPFGGGQLPSYGRLTLPLDPSIDLQLNISFTYGPVILNGNGMDYYESPLLGSGWLTIPPKNGTVLGLINKAGRGDQFTVIPHVLTFAPRESSGNCYLPIQTSQIMDKDVLTESNLVVLPTQNFRYVIATYDISRGDHAIVYYVYDPIRTISYTHPFRLTTKGRPDFLRIECFVWDDDLWCHQFYRFETDSTNSTTSVENLVRIRFSCSRSKP</sequence>
<proteinExistence type="inferred from homology"/>